<keyword id="KW-0687">Ribonucleoprotein</keyword>
<keyword id="KW-0689">Ribosomal protein</keyword>
<keyword id="KW-0694">RNA-binding</keyword>
<keyword id="KW-0699">rRNA-binding</keyword>
<reference key="1">
    <citation type="journal article" date="2008" name="Proc. Natl. Acad. Sci. U.S.A.">
        <title>Complete genome of the uncultured termite group 1 bacteria in a single host protist cell.</title>
        <authorList>
            <person name="Hongoh Y."/>
            <person name="Sharma V.K."/>
            <person name="Prakash T."/>
            <person name="Noda S."/>
            <person name="Taylor T.D."/>
            <person name="Kudo T."/>
            <person name="Sakaki Y."/>
            <person name="Toyoda A."/>
            <person name="Hattori M."/>
            <person name="Ohkuma M."/>
        </authorList>
    </citation>
    <scope>NUCLEOTIDE SEQUENCE [LARGE SCALE GENOMIC DNA]</scope>
</reference>
<proteinExistence type="inferred from homology"/>
<feature type="chain" id="PRO_1000142735" description="Large ribosomal subunit protein uL18">
    <location>
        <begin position="1"/>
        <end position="119"/>
    </location>
</feature>
<dbReference type="EMBL" id="AP009510">
    <property type="protein sequence ID" value="BAG13581.1"/>
    <property type="molecule type" value="Genomic_DNA"/>
</dbReference>
<dbReference type="RefSeq" id="WP_015423110.1">
    <property type="nucleotide sequence ID" value="NC_020419.1"/>
</dbReference>
<dbReference type="SMR" id="B1GZ99"/>
<dbReference type="STRING" id="471821.TGRD_098"/>
<dbReference type="KEGG" id="rsd:TGRD_098"/>
<dbReference type="PATRIC" id="fig|471821.5.peg.142"/>
<dbReference type="HOGENOM" id="CLU_098841_0_1_0"/>
<dbReference type="Proteomes" id="UP000001691">
    <property type="component" value="Chromosome"/>
</dbReference>
<dbReference type="GO" id="GO:0022625">
    <property type="term" value="C:cytosolic large ribosomal subunit"/>
    <property type="evidence" value="ECO:0007669"/>
    <property type="project" value="TreeGrafter"/>
</dbReference>
<dbReference type="GO" id="GO:0008097">
    <property type="term" value="F:5S rRNA binding"/>
    <property type="evidence" value="ECO:0007669"/>
    <property type="project" value="TreeGrafter"/>
</dbReference>
<dbReference type="GO" id="GO:0003735">
    <property type="term" value="F:structural constituent of ribosome"/>
    <property type="evidence" value="ECO:0007669"/>
    <property type="project" value="InterPro"/>
</dbReference>
<dbReference type="GO" id="GO:0006412">
    <property type="term" value="P:translation"/>
    <property type="evidence" value="ECO:0007669"/>
    <property type="project" value="UniProtKB-UniRule"/>
</dbReference>
<dbReference type="CDD" id="cd00432">
    <property type="entry name" value="Ribosomal_L18_L5e"/>
    <property type="match status" value="1"/>
</dbReference>
<dbReference type="FunFam" id="3.30.420.100:FF:000001">
    <property type="entry name" value="50S ribosomal protein L18"/>
    <property type="match status" value="1"/>
</dbReference>
<dbReference type="Gene3D" id="3.30.420.100">
    <property type="match status" value="1"/>
</dbReference>
<dbReference type="HAMAP" id="MF_01337_B">
    <property type="entry name" value="Ribosomal_uL18_B"/>
    <property type="match status" value="1"/>
</dbReference>
<dbReference type="InterPro" id="IPR004389">
    <property type="entry name" value="Ribosomal_uL18_bac-type"/>
</dbReference>
<dbReference type="InterPro" id="IPR005484">
    <property type="entry name" value="Ribosomal_uL18_bac/euk"/>
</dbReference>
<dbReference type="NCBIfam" id="TIGR00060">
    <property type="entry name" value="L18_bact"/>
    <property type="match status" value="1"/>
</dbReference>
<dbReference type="PANTHER" id="PTHR12899">
    <property type="entry name" value="39S RIBOSOMAL PROTEIN L18, MITOCHONDRIAL"/>
    <property type="match status" value="1"/>
</dbReference>
<dbReference type="PANTHER" id="PTHR12899:SF3">
    <property type="entry name" value="LARGE RIBOSOMAL SUBUNIT PROTEIN UL18M"/>
    <property type="match status" value="1"/>
</dbReference>
<dbReference type="Pfam" id="PF00861">
    <property type="entry name" value="Ribosomal_L18p"/>
    <property type="match status" value="1"/>
</dbReference>
<dbReference type="SUPFAM" id="SSF53137">
    <property type="entry name" value="Translational machinery components"/>
    <property type="match status" value="1"/>
</dbReference>
<organism>
    <name type="scientific">Endomicrobium trichonymphae</name>
    <dbReference type="NCBI Taxonomy" id="1408204"/>
    <lineage>
        <taxon>Bacteria</taxon>
        <taxon>Pseudomonadati</taxon>
        <taxon>Elusimicrobiota</taxon>
        <taxon>Endomicrobiia</taxon>
        <taxon>Endomicrobiales</taxon>
        <taxon>Endomicrobiaceae</taxon>
        <taxon>Candidatus Endomicrobiellum</taxon>
    </lineage>
</organism>
<accession>B1GZ99</accession>
<gene>
    <name evidence="1" type="primary">rplR</name>
    <name type="ordered locus">TGRD_098</name>
</gene>
<protein>
    <recommendedName>
        <fullName evidence="1">Large ribosomal subunit protein uL18</fullName>
    </recommendedName>
    <alternativeName>
        <fullName evidence="2">50S ribosomal protein L18</fullName>
    </alternativeName>
</protein>
<name>RL18_ENDTX</name>
<sequence>MKDSNKRFDYRVKRVRSKINGTHDKPRLSVYRGHKHIYAQIIDDSRGVTLASASTLSPELKGKLEINDTVEAAKSVGGLIAKKAVEKGVKKVVFDRRGYEYTGKIKALADTARESGLEF</sequence>
<comment type="function">
    <text evidence="1">This is one of the proteins that bind and probably mediate the attachment of the 5S RNA into the large ribosomal subunit, where it forms part of the central protuberance.</text>
</comment>
<comment type="subunit">
    <text evidence="1">Part of the 50S ribosomal subunit; part of the 5S rRNA/L5/L18/L25 subcomplex. Contacts the 5S and 23S rRNAs.</text>
</comment>
<comment type="similarity">
    <text evidence="1">Belongs to the universal ribosomal protein uL18 family.</text>
</comment>
<evidence type="ECO:0000255" key="1">
    <source>
        <dbReference type="HAMAP-Rule" id="MF_01337"/>
    </source>
</evidence>
<evidence type="ECO:0000305" key="2"/>